<sequence length="87" mass="9633">MYVIELALKLSPLPVSVQRKALADAEAVYQQVRKCLERGQPHLLELSCEKVEDKKVTVLVSEIVAVQLYEKTAATGGSKRPGFSFET</sequence>
<accession>A2CD15</accession>
<feature type="chain" id="PRO_1000067775" description="UPF0367 protein P9303_26451">
    <location>
        <begin position="1"/>
        <end position="87"/>
    </location>
</feature>
<comment type="similarity">
    <text evidence="1">Belongs to the UPF0367 family.</text>
</comment>
<gene>
    <name type="ordered locus">P9303_26451</name>
</gene>
<protein>
    <recommendedName>
        <fullName evidence="1">UPF0367 protein P9303_26451</fullName>
    </recommendedName>
</protein>
<dbReference type="EMBL" id="CP000554">
    <property type="protein sequence ID" value="ABM79375.1"/>
    <property type="molecule type" value="Genomic_DNA"/>
</dbReference>
<dbReference type="RefSeq" id="WP_011827218.1">
    <property type="nucleotide sequence ID" value="NC_008820.1"/>
</dbReference>
<dbReference type="STRING" id="59922.P9303_26451"/>
<dbReference type="KEGG" id="pmf:P9303_26451"/>
<dbReference type="HOGENOM" id="CLU_180777_0_0_3"/>
<dbReference type="BioCyc" id="PMAR59922:G1G80-2315-MONOMER"/>
<dbReference type="Proteomes" id="UP000002274">
    <property type="component" value="Chromosome"/>
</dbReference>
<dbReference type="HAMAP" id="MF_01360">
    <property type="entry name" value="UPF0367"/>
    <property type="match status" value="1"/>
</dbReference>
<dbReference type="InterPro" id="IPR020885">
    <property type="entry name" value="UPF0367"/>
</dbReference>
<dbReference type="NCBIfam" id="NF010236">
    <property type="entry name" value="PRK13683.1"/>
    <property type="match status" value="1"/>
</dbReference>
<reference key="1">
    <citation type="journal article" date="2007" name="PLoS Genet.">
        <title>Patterns and implications of gene gain and loss in the evolution of Prochlorococcus.</title>
        <authorList>
            <person name="Kettler G.C."/>
            <person name="Martiny A.C."/>
            <person name="Huang K."/>
            <person name="Zucker J."/>
            <person name="Coleman M.L."/>
            <person name="Rodrigue S."/>
            <person name="Chen F."/>
            <person name="Lapidus A."/>
            <person name="Ferriera S."/>
            <person name="Johnson J."/>
            <person name="Steglich C."/>
            <person name="Church G.M."/>
            <person name="Richardson P."/>
            <person name="Chisholm S.W."/>
        </authorList>
    </citation>
    <scope>NUCLEOTIDE SEQUENCE [LARGE SCALE GENOMIC DNA]</scope>
    <source>
        <strain>MIT 9303</strain>
    </source>
</reference>
<name>Y2645_PROM3</name>
<proteinExistence type="inferred from homology"/>
<evidence type="ECO:0000255" key="1">
    <source>
        <dbReference type="HAMAP-Rule" id="MF_01360"/>
    </source>
</evidence>
<organism>
    <name type="scientific">Prochlorococcus marinus (strain MIT 9303)</name>
    <dbReference type="NCBI Taxonomy" id="59922"/>
    <lineage>
        <taxon>Bacteria</taxon>
        <taxon>Bacillati</taxon>
        <taxon>Cyanobacteriota</taxon>
        <taxon>Cyanophyceae</taxon>
        <taxon>Synechococcales</taxon>
        <taxon>Prochlorococcaceae</taxon>
        <taxon>Prochlorococcus</taxon>
    </lineage>
</organism>